<proteinExistence type="inferred from homology"/>
<organism>
    <name type="scientific">Vesicomyosocius okutanii subsp. Calyptogena okutanii (strain HA)</name>
    <dbReference type="NCBI Taxonomy" id="412965"/>
    <lineage>
        <taxon>Bacteria</taxon>
        <taxon>Pseudomonadati</taxon>
        <taxon>Pseudomonadota</taxon>
        <taxon>Gammaproteobacteria</taxon>
        <taxon>Candidatus Pseudothioglobaceae</taxon>
        <taxon>Candidatus Vesicomyosocius</taxon>
    </lineage>
</organism>
<accession>A5CWW1</accession>
<gene>
    <name evidence="1" type="primary">murG</name>
    <name type="ordered locus">COSY_0460</name>
</gene>
<feature type="chain" id="PRO_0000315199" description="UDP-N-acetylglucosamine--N-acetylmuramyl-(pentapeptide) pyrophosphoryl-undecaprenol N-acetylglucosamine transferase">
    <location>
        <begin position="1"/>
        <end position="340"/>
    </location>
</feature>
<feature type="binding site" evidence="1">
    <location>
        <begin position="15"/>
        <end position="17"/>
    </location>
    <ligand>
        <name>UDP-N-acetyl-alpha-D-glucosamine</name>
        <dbReference type="ChEBI" id="CHEBI:57705"/>
    </ligand>
</feature>
<feature type="binding site" evidence="1">
    <location>
        <position position="127"/>
    </location>
    <ligand>
        <name>UDP-N-acetyl-alpha-D-glucosamine</name>
        <dbReference type="ChEBI" id="CHEBI:57705"/>
    </ligand>
</feature>
<feature type="binding site" evidence="1">
    <location>
        <position position="184"/>
    </location>
    <ligand>
        <name>UDP-N-acetyl-alpha-D-glucosamine</name>
        <dbReference type="ChEBI" id="CHEBI:57705"/>
    </ligand>
</feature>
<feature type="binding site" evidence="1">
    <location>
        <position position="230"/>
    </location>
    <ligand>
        <name>UDP-N-acetyl-alpha-D-glucosamine</name>
        <dbReference type="ChEBI" id="CHEBI:57705"/>
    </ligand>
</feature>
<feature type="binding site" evidence="1">
    <location>
        <position position="275"/>
    </location>
    <ligand>
        <name>UDP-N-acetyl-alpha-D-glucosamine</name>
        <dbReference type="ChEBI" id="CHEBI:57705"/>
    </ligand>
</feature>
<sequence>MFNTAKKILIMAGGTGGHIFPALAIANELKKHSSNIQWLGSNLGMENNIIPKHNIKLHTVSSVGLRGKNVISLIKAPFLLSYATLQVIKIFLKFKPDVVLGMGGFTSGIGGLVAWVFKTTLVIHEQNSIPGTTNKILNKIATKTFQAFDDTFIRNATTSGNPIVFNPIEKQNNNKLNLLIIGGSLGSKPINEIVTQLNIDINIWHQTGKLHADTVKSQYKNSAVKVTAFITEMASAYAWADIVLCRAGAMTVSELMLSATSSILIPLPNSIDNHQFHNAKILSDNNAGILIEQKDLTIELLEGILLNINKNQIKQMSSNALKIAKPNAVKQIVDYLLVSD</sequence>
<keyword id="KW-0131">Cell cycle</keyword>
<keyword id="KW-0132">Cell division</keyword>
<keyword id="KW-0997">Cell inner membrane</keyword>
<keyword id="KW-1003">Cell membrane</keyword>
<keyword id="KW-0133">Cell shape</keyword>
<keyword id="KW-0961">Cell wall biogenesis/degradation</keyword>
<keyword id="KW-0328">Glycosyltransferase</keyword>
<keyword id="KW-0472">Membrane</keyword>
<keyword id="KW-0573">Peptidoglycan synthesis</keyword>
<keyword id="KW-1185">Reference proteome</keyword>
<keyword id="KW-0808">Transferase</keyword>
<dbReference type="EC" id="2.4.1.227" evidence="1"/>
<dbReference type="EMBL" id="AP009247">
    <property type="protein sequence ID" value="BAF61579.1"/>
    <property type="molecule type" value="Genomic_DNA"/>
</dbReference>
<dbReference type="RefSeq" id="WP_011929849.1">
    <property type="nucleotide sequence ID" value="NC_009465.1"/>
</dbReference>
<dbReference type="SMR" id="A5CWW1"/>
<dbReference type="STRING" id="412965.COSY_0460"/>
<dbReference type="CAZy" id="GT28">
    <property type="family name" value="Glycosyltransferase Family 28"/>
</dbReference>
<dbReference type="KEGG" id="vok:COSY_0460"/>
<dbReference type="eggNOG" id="COG0707">
    <property type="taxonomic scope" value="Bacteria"/>
</dbReference>
<dbReference type="HOGENOM" id="CLU_037404_2_0_6"/>
<dbReference type="OrthoDB" id="9808936at2"/>
<dbReference type="UniPathway" id="UPA00219"/>
<dbReference type="Proteomes" id="UP000000247">
    <property type="component" value="Chromosome"/>
</dbReference>
<dbReference type="GO" id="GO:0005886">
    <property type="term" value="C:plasma membrane"/>
    <property type="evidence" value="ECO:0007669"/>
    <property type="project" value="UniProtKB-SubCell"/>
</dbReference>
<dbReference type="GO" id="GO:0051991">
    <property type="term" value="F:UDP-N-acetyl-D-glucosamine:N-acetylmuramoyl-L-alanyl-D-glutamyl-meso-2,6-diaminopimelyl-D-alanyl-D-alanine-diphosphoundecaprenol 4-beta-N-acetylglucosaminlytransferase activity"/>
    <property type="evidence" value="ECO:0007669"/>
    <property type="project" value="RHEA"/>
</dbReference>
<dbReference type="GO" id="GO:0050511">
    <property type="term" value="F:undecaprenyldiphospho-muramoylpentapeptide beta-N-acetylglucosaminyltransferase activity"/>
    <property type="evidence" value="ECO:0007669"/>
    <property type="project" value="UniProtKB-UniRule"/>
</dbReference>
<dbReference type="GO" id="GO:0005975">
    <property type="term" value="P:carbohydrate metabolic process"/>
    <property type="evidence" value="ECO:0007669"/>
    <property type="project" value="InterPro"/>
</dbReference>
<dbReference type="GO" id="GO:0051301">
    <property type="term" value="P:cell division"/>
    <property type="evidence" value="ECO:0007669"/>
    <property type="project" value="UniProtKB-KW"/>
</dbReference>
<dbReference type="GO" id="GO:0071555">
    <property type="term" value="P:cell wall organization"/>
    <property type="evidence" value="ECO:0007669"/>
    <property type="project" value="UniProtKB-KW"/>
</dbReference>
<dbReference type="GO" id="GO:0030259">
    <property type="term" value="P:lipid glycosylation"/>
    <property type="evidence" value="ECO:0007669"/>
    <property type="project" value="UniProtKB-UniRule"/>
</dbReference>
<dbReference type="GO" id="GO:0009252">
    <property type="term" value="P:peptidoglycan biosynthetic process"/>
    <property type="evidence" value="ECO:0007669"/>
    <property type="project" value="UniProtKB-UniRule"/>
</dbReference>
<dbReference type="GO" id="GO:0008360">
    <property type="term" value="P:regulation of cell shape"/>
    <property type="evidence" value="ECO:0007669"/>
    <property type="project" value="UniProtKB-KW"/>
</dbReference>
<dbReference type="CDD" id="cd03785">
    <property type="entry name" value="GT28_MurG"/>
    <property type="match status" value="1"/>
</dbReference>
<dbReference type="Gene3D" id="3.40.50.2000">
    <property type="entry name" value="Glycogen Phosphorylase B"/>
    <property type="match status" value="2"/>
</dbReference>
<dbReference type="HAMAP" id="MF_00033">
    <property type="entry name" value="MurG"/>
    <property type="match status" value="1"/>
</dbReference>
<dbReference type="InterPro" id="IPR006009">
    <property type="entry name" value="GlcNAc_MurG"/>
</dbReference>
<dbReference type="InterPro" id="IPR007235">
    <property type="entry name" value="Glyco_trans_28_C"/>
</dbReference>
<dbReference type="InterPro" id="IPR004276">
    <property type="entry name" value="GlycoTrans_28_N"/>
</dbReference>
<dbReference type="NCBIfam" id="TIGR01133">
    <property type="entry name" value="murG"/>
    <property type="match status" value="1"/>
</dbReference>
<dbReference type="PANTHER" id="PTHR21015:SF22">
    <property type="entry name" value="GLYCOSYLTRANSFERASE"/>
    <property type="match status" value="1"/>
</dbReference>
<dbReference type="PANTHER" id="PTHR21015">
    <property type="entry name" value="UDP-N-ACETYLGLUCOSAMINE--N-ACETYLMURAMYL-(PENTAPEPTIDE) PYROPHOSPHORYL-UNDECAPRENOL N-ACETYLGLUCOSAMINE TRANSFERASE 1"/>
    <property type="match status" value="1"/>
</dbReference>
<dbReference type="Pfam" id="PF04101">
    <property type="entry name" value="Glyco_tran_28_C"/>
    <property type="match status" value="1"/>
</dbReference>
<dbReference type="Pfam" id="PF03033">
    <property type="entry name" value="Glyco_transf_28"/>
    <property type="match status" value="1"/>
</dbReference>
<dbReference type="SUPFAM" id="SSF53756">
    <property type="entry name" value="UDP-Glycosyltransferase/glycogen phosphorylase"/>
    <property type="match status" value="1"/>
</dbReference>
<evidence type="ECO:0000255" key="1">
    <source>
        <dbReference type="HAMAP-Rule" id="MF_00033"/>
    </source>
</evidence>
<comment type="function">
    <text evidence="1">Cell wall formation. Catalyzes the transfer of a GlcNAc subunit on undecaprenyl-pyrophosphoryl-MurNAc-pentapeptide (lipid intermediate I) to form undecaprenyl-pyrophosphoryl-MurNAc-(pentapeptide)GlcNAc (lipid intermediate II).</text>
</comment>
<comment type="catalytic activity">
    <reaction evidence="1">
        <text>di-trans,octa-cis-undecaprenyl diphospho-N-acetyl-alpha-D-muramoyl-L-alanyl-D-glutamyl-meso-2,6-diaminopimeloyl-D-alanyl-D-alanine + UDP-N-acetyl-alpha-D-glucosamine = di-trans,octa-cis-undecaprenyl diphospho-[N-acetyl-alpha-D-glucosaminyl-(1-&gt;4)]-N-acetyl-alpha-D-muramoyl-L-alanyl-D-glutamyl-meso-2,6-diaminopimeloyl-D-alanyl-D-alanine + UDP + H(+)</text>
        <dbReference type="Rhea" id="RHEA:31227"/>
        <dbReference type="ChEBI" id="CHEBI:15378"/>
        <dbReference type="ChEBI" id="CHEBI:57705"/>
        <dbReference type="ChEBI" id="CHEBI:58223"/>
        <dbReference type="ChEBI" id="CHEBI:61387"/>
        <dbReference type="ChEBI" id="CHEBI:61388"/>
        <dbReference type="EC" id="2.4.1.227"/>
    </reaction>
</comment>
<comment type="pathway">
    <text evidence="1">Cell wall biogenesis; peptidoglycan biosynthesis.</text>
</comment>
<comment type="subcellular location">
    <subcellularLocation>
        <location evidence="1">Cell inner membrane</location>
        <topology evidence="1">Peripheral membrane protein</topology>
        <orientation evidence="1">Cytoplasmic side</orientation>
    </subcellularLocation>
</comment>
<comment type="similarity">
    <text evidence="1">Belongs to the glycosyltransferase 28 family. MurG subfamily.</text>
</comment>
<protein>
    <recommendedName>
        <fullName evidence="1">UDP-N-acetylglucosamine--N-acetylmuramyl-(pentapeptide) pyrophosphoryl-undecaprenol N-acetylglucosamine transferase</fullName>
        <ecNumber evidence="1">2.4.1.227</ecNumber>
    </recommendedName>
    <alternativeName>
        <fullName evidence="1">Undecaprenyl-PP-MurNAc-pentapeptide-UDPGlcNAc GlcNAc transferase</fullName>
    </alternativeName>
</protein>
<reference key="1">
    <citation type="journal article" date="2007" name="Curr. Biol.">
        <title>Reduced genome of the thioautotrophic intracellular symbiont in a deep-sea clam, Calyptogena okutanii.</title>
        <authorList>
            <person name="Kuwahara H."/>
            <person name="Yoshida T."/>
            <person name="Takaki Y."/>
            <person name="Shimamura S."/>
            <person name="Nishi S."/>
            <person name="Harada M."/>
            <person name="Matsuyama K."/>
            <person name="Takishita K."/>
            <person name="Kawato M."/>
            <person name="Uematsu K."/>
            <person name="Fujiwara Y."/>
            <person name="Sato T."/>
            <person name="Kato C."/>
            <person name="Kitagawa M."/>
            <person name="Kato I."/>
            <person name="Maruyama T."/>
        </authorList>
    </citation>
    <scope>NUCLEOTIDE SEQUENCE [LARGE SCALE GENOMIC DNA]</scope>
    <source>
        <strain>HA</strain>
    </source>
</reference>
<name>MURG_VESOH</name>